<keyword id="KW-0067">ATP-binding</keyword>
<keyword id="KW-0436">Ligase</keyword>
<keyword id="KW-0479">Metal-binding</keyword>
<keyword id="KW-0547">Nucleotide-binding</keyword>
<keyword id="KW-0671">Queuosine biosynthesis</keyword>
<keyword id="KW-1185">Reference proteome</keyword>
<keyword id="KW-0862">Zinc</keyword>
<organism>
    <name type="scientific">Pseudomonas aeruginosa (strain ATCC 15692 / DSM 22644 / CIP 104116 / JCM 14847 / LMG 12228 / 1C / PRS 101 / PAO1)</name>
    <dbReference type="NCBI Taxonomy" id="208964"/>
    <lineage>
        <taxon>Bacteria</taxon>
        <taxon>Pseudomonadati</taxon>
        <taxon>Pseudomonadota</taxon>
        <taxon>Gammaproteobacteria</taxon>
        <taxon>Pseudomonadales</taxon>
        <taxon>Pseudomonadaceae</taxon>
        <taxon>Pseudomonas</taxon>
    </lineage>
</organism>
<dbReference type="EC" id="6.3.4.20" evidence="1"/>
<dbReference type="EMBL" id="AY273870">
    <property type="protein sequence ID" value="AAP82946.1"/>
    <property type="molecule type" value="Genomic_DNA"/>
</dbReference>
<dbReference type="EMBL" id="AE004091">
    <property type="protein sequence ID" value="AAG04365.1"/>
    <property type="molecule type" value="Genomic_DNA"/>
</dbReference>
<dbReference type="PIR" id="E83522">
    <property type="entry name" value="E83522"/>
</dbReference>
<dbReference type="RefSeq" id="NP_249667.1">
    <property type="nucleotide sequence ID" value="NC_002516.2"/>
</dbReference>
<dbReference type="RefSeq" id="WP_003111415.1">
    <property type="nucleotide sequence ID" value="NZ_QZGE01000007.1"/>
</dbReference>
<dbReference type="SMR" id="Q9I4Z2"/>
<dbReference type="FunCoup" id="Q9I4Z2">
    <property type="interactions" value="208"/>
</dbReference>
<dbReference type="STRING" id="208964.PA0976"/>
<dbReference type="PaxDb" id="208964-PA0976"/>
<dbReference type="DNASU" id="878060"/>
<dbReference type="GeneID" id="878060"/>
<dbReference type="KEGG" id="pae:PA0976"/>
<dbReference type="PATRIC" id="fig|208964.12.peg.1014"/>
<dbReference type="PseudoCAP" id="PA0976"/>
<dbReference type="HOGENOM" id="CLU_081854_1_1_6"/>
<dbReference type="InParanoid" id="Q9I4Z2"/>
<dbReference type="OrthoDB" id="9789567at2"/>
<dbReference type="PhylomeDB" id="Q9I4Z2"/>
<dbReference type="BioCyc" id="PAER208964:G1FZ6-997-MONOMER"/>
<dbReference type="UniPathway" id="UPA00391"/>
<dbReference type="Proteomes" id="UP000002438">
    <property type="component" value="Chromosome"/>
</dbReference>
<dbReference type="GO" id="GO:0005524">
    <property type="term" value="F:ATP binding"/>
    <property type="evidence" value="ECO:0007669"/>
    <property type="project" value="UniProtKB-UniRule"/>
</dbReference>
<dbReference type="GO" id="GO:0016879">
    <property type="term" value="F:ligase activity, forming carbon-nitrogen bonds"/>
    <property type="evidence" value="ECO:0007669"/>
    <property type="project" value="UniProtKB-UniRule"/>
</dbReference>
<dbReference type="GO" id="GO:0008270">
    <property type="term" value="F:zinc ion binding"/>
    <property type="evidence" value="ECO:0007669"/>
    <property type="project" value="UniProtKB-UniRule"/>
</dbReference>
<dbReference type="GO" id="GO:0008616">
    <property type="term" value="P:queuosine biosynthetic process"/>
    <property type="evidence" value="ECO:0007669"/>
    <property type="project" value="UniProtKB-UniRule"/>
</dbReference>
<dbReference type="CDD" id="cd01995">
    <property type="entry name" value="QueC-like"/>
    <property type="match status" value="1"/>
</dbReference>
<dbReference type="FunFam" id="3.40.50.620:FF:000131">
    <property type="entry name" value="7-cyano-7-deazaguanine synthase"/>
    <property type="match status" value="1"/>
</dbReference>
<dbReference type="Gene3D" id="3.40.50.620">
    <property type="entry name" value="HUPs"/>
    <property type="match status" value="1"/>
</dbReference>
<dbReference type="HAMAP" id="MF_01633">
    <property type="entry name" value="QueC"/>
    <property type="match status" value="1"/>
</dbReference>
<dbReference type="InterPro" id="IPR018317">
    <property type="entry name" value="QueC"/>
</dbReference>
<dbReference type="InterPro" id="IPR014729">
    <property type="entry name" value="Rossmann-like_a/b/a_fold"/>
</dbReference>
<dbReference type="NCBIfam" id="TIGR00364">
    <property type="entry name" value="7-cyano-7-deazaguanine synthase QueC"/>
    <property type="match status" value="1"/>
</dbReference>
<dbReference type="PANTHER" id="PTHR42914">
    <property type="entry name" value="7-CYANO-7-DEAZAGUANINE SYNTHASE"/>
    <property type="match status" value="1"/>
</dbReference>
<dbReference type="PANTHER" id="PTHR42914:SF1">
    <property type="entry name" value="7-CYANO-7-DEAZAGUANINE SYNTHASE"/>
    <property type="match status" value="1"/>
</dbReference>
<dbReference type="Pfam" id="PF06508">
    <property type="entry name" value="QueC"/>
    <property type="match status" value="1"/>
</dbReference>
<dbReference type="PIRSF" id="PIRSF006293">
    <property type="entry name" value="ExsB"/>
    <property type="match status" value="1"/>
</dbReference>
<dbReference type="SUPFAM" id="SSF52402">
    <property type="entry name" value="Adenine nucleotide alpha hydrolases-like"/>
    <property type="match status" value="1"/>
</dbReference>
<proteinExistence type="inferred from homology"/>
<sequence length="224" mass="23900">MNQKKAVILLSGGLDSATVVAMAKADGYACYTMSFDYGQRHRAELQAAERVARQLGVIEHKVIGLDLNGMGGSALTDESIAVPESPSEGIPVTYVPARNTVFLSLALGWAEVLDARDIFIGVNAVDYSGYPDCRPEFVEAFERMANLATKAGVEGNGFRIQAPLQYLSKAQIIQAGVARGVDYGLTVSCYQADEQGRACGKCDSCRLRADGFAAAGISDPTPYF</sequence>
<reference key="1">
    <citation type="journal article" date="2004" name="Proc. Natl. Acad. Sci. U.S.A.">
        <title>The broad host range pathogen Pseudomonas aeruginosa strain PA14 carries two pathogenicity islands harboring plant and animal virulence genes.</title>
        <authorList>
            <person name="He J."/>
            <person name="Baldini R.L."/>
            <person name="Deziel E."/>
            <person name="Saucier M."/>
            <person name="Zhang Q."/>
            <person name="Liberati N.T."/>
            <person name="Lee D."/>
            <person name="Urbach J."/>
            <person name="Goodman H.M."/>
            <person name="Rahme L.G."/>
        </authorList>
    </citation>
    <scope>NUCLEOTIDE SEQUENCE [GENOMIC DNA]</scope>
    <source>
        <strain>PA14</strain>
    </source>
</reference>
<reference key="2">
    <citation type="journal article" date="2000" name="Nature">
        <title>Complete genome sequence of Pseudomonas aeruginosa PAO1, an opportunistic pathogen.</title>
        <authorList>
            <person name="Stover C.K."/>
            <person name="Pham X.-Q.T."/>
            <person name="Erwin A.L."/>
            <person name="Mizoguchi S.D."/>
            <person name="Warrener P."/>
            <person name="Hickey M.J."/>
            <person name="Brinkman F.S.L."/>
            <person name="Hufnagle W.O."/>
            <person name="Kowalik D.J."/>
            <person name="Lagrou M."/>
            <person name="Garber R.L."/>
            <person name="Goltry L."/>
            <person name="Tolentino E."/>
            <person name="Westbrock-Wadman S."/>
            <person name="Yuan Y."/>
            <person name="Brody L.L."/>
            <person name="Coulter S.N."/>
            <person name="Folger K.R."/>
            <person name="Kas A."/>
            <person name="Larbig K."/>
            <person name="Lim R.M."/>
            <person name="Smith K.A."/>
            <person name="Spencer D.H."/>
            <person name="Wong G.K.-S."/>
            <person name="Wu Z."/>
            <person name="Paulsen I.T."/>
            <person name="Reizer J."/>
            <person name="Saier M.H. Jr."/>
            <person name="Hancock R.E.W."/>
            <person name="Lory S."/>
            <person name="Olson M.V."/>
        </authorList>
    </citation>
    <scope>NUCLEOTIDE SEQUENCE [LARGE SCALE GENOMIC DNA]</scope>
    <source>
        <strain>ATCC 15692 / DSM 22644 / CIP 104116 / JCM 14847 / LMG 12228 / 1C / PRS 101 / PAO1</strain>
    </source>
</reference>
<accession>Q9I4Z2</accession>
<accession>Q79JB2</accession>
<feature type="chain" id="PRO_0000246884" description="7-cyano-7-deazaguanine synthase">
    <location>
        <begin position="1"/>
        <end position="224"/>
    </location>
</feature>
<feature type="binding site" evidence="1">
    <location>
        <begin position="10"/>
        <end position="20"/>
    </location>
    <ligand>
        <name>ATP</name>
        <dbReference type="ChEBI" id="CHEBI:30616"/>
    </ligand>
</feature>
<feature type="binding site" evidence="1">
    <location>
        <position position="189"/>
    </location>
    <ligand>
        <name>Zn(2+)</name>
        <dbReference type="ChEBI" id="CHEBI:29105"/>
    </ligand>
</feature>
<feature type="binding site" evidence="1">
    <location>
        <position position="199"/>
    </location>
    <ligand>
        <name>Zn(2+)</name>
        <dbReference type="ChEBI" id="CHEBI:29105"/>
    </ligand>
</feature>
<feature type="binding site" evidence="1">
    <location>
        <position position="202"/>
    </location>
    <ligand>
        <name>Zn(2+)</name>
        <dbReference type="ChEBI" id="CHEBI:29105"/>
    </ligand>
</feature>
<feature type="binding site" evidence="1">
    <location>
        <position position="205"/>
    </location>
    <ligand>
        <name>Zn(2+)</name>
        <dbReference type="ChEBI" id="CHEBI:29105"/>
    </ligand>
</feature>
<name>QUEC_PSEAE</name>
<comment type="function">
    <text evidence="1">Catalyzes the ATP-dependent conversion of 7-carboxy-7-deazaguanine (CDG) to 7-cyano-7-deazaguanine (preQ(0)).</text>
</comment>
<comment type="catalytic activity">
    <reaction evidence="1">
        <text>7-carboxy-7-deazaguanine + NH4(+) + ATP = 7-cyano-7-deazaguanine + ADP + phosphate + H2O + H(+)</text>
        <dbReference type="Rhea" id="RHEA:27982"/>
        <dbReference type="ChEBI" id="CHEBI:15377"/>
        <dbReference type="ChEBI" id="CHEBI:15378"/>
        <dbReference type="ChEBI" id="CHEBI:28938"/>
        <dbReference type="ChEBI" id="CHEBI:30616"/>
        <dbReference type="ChEBI" id="CHEBI:43474"/>
        <dbReference type="ChEBI" id="CHEBI:45075"/>
        <dbReference type="ChEBI" id="CHEBI:61036"/>
        <dbReference type="ChEBI" id="CHEBI:456216"/>
        <dbReference type="EC" id="6.3.4.20"/>
    </reaction>
</comment>
<comment type="cofactor">
    <cofactor evidence="1">
        <name>Zn(2+)</name>
        <dbReference type="ChEBI" id="CHEBI:29105"/>
    </cofactor>
    <text evidence="1">Binds 1 zinc ion per subunit.</text>
</comment>
<comment type="pathway">
    <text evidence="1">Purine metabolism; 7-cyano-7-deazaguanine biosynthesis.</text>
</comment>
<comment type="similarity">
    <text evidence="1">Belongs to the QueC family.</text>
</comment>
<evidence type="ECO:0000255" key="1">
    <source>
        <dbReference type="HAMAP-Rule" id="MF_01633"/>
    </source>
</evidence>
<protein>
    <recommendedName>
        <fullName evidence="1">7-cyano-7-deazaguanine synthase</fullName>
        <ecNumber evidence="1">6.3.4.20</ecNumber>
    </recommendedName>
    <alternativeName>
        <fullName evidence="1">7-cyano-7-carbaguanine synthase</fullName>
    </alternativeName>
    <alternativeName>
        <fullName evidence="1">PreQ(0) synthase</fullName>
    </alternativeName>
    <alternativeName>
        <fullName evidence="1">Queuosine biosynthesis protein QueC</fullName>
    </alternativeName>
</protein>
<gene>
    <name evidence="1" type="primary">queC</name>
    <name type="ordered locus">PA0976</name>
</gene>